<accession>Q7HKX5</accession>
<comment type="function">
    <text evidence="1">May play a role in photosystem I and II biogenesis.</text>
</comment>
<comment type="subcellular location">
    <subcellularLocation>
        <location evidence="1">Plastid</location>
        <location evidence="1">Chloroplast thylakoid membrane</location>
        <topology evidence="1">Single-pass membrane protein</topology>
    </subcellularLocation>
</comment>
<comment type="similarity">
    <text evidence="1">Belongs to the PsbN family.</text>
</comment>
<comment type="caution">
    <text evidence="1">Originally thought to be a component of PSII; based on experiments in Synechocystis, N.tabacum and barley, and its absence from PSII in T.elongatus and T.vulcanus, this is probably not true.</text>
</comment>
<reference key="1">
    <citation type="journal article" date="2003" name="Plant Syst. Evol.">
        <title>The chloroplast genome of the 'basal' angiosperm Calycanthus fertilis -- structural and phylogenetic analyses.</title>
        <authorList>
            <person name="Goremykin V."/>
            <person name="Hirsch-Ernst K.I."/>
            <person name="Woelfl S."/>
            <person name="Hellwig F.H."/>
        </authorList>
    </citation>
    <scope>NUCLEOTIDE SEQUENCE [LARGE SCALE GENOMIC DNA]</scope>
</reference>
<protein>
    <recommendedName>
        <fullName evidence="1">Protein PsbN</fullName>
    </recommendedName>
</protein>
<proteinExistence type="inferred from homology"/>
<name>PSBN_CALFG</name>
<sequence>METATLVAISISGSLVSFTGYALYTAFGQPSQQLRDPFEEHGD</sequence>
<organism>
    <name type="scientific">Calycanthus floridus var. glaucus</name>
    <name type="common">Eastern sweetshrub</name>
    <name type="synonym">Calycanthus fertilis var. ferax</name>
    <dbReference type="NCBI Taxonomy" id="212734"/>
    <lineage>
        <taxon>Eukaryota</taxon>
        <taxon>Viridiplantae</taxon>
        <taxon>Streptophyta</taxon>
        <taxon>Embryophyta</taxon>
        <taxon>Tracheophyta</taxon>
        <taxon>Spermatophyta</taxon>
        <taxon>Magnoliopsida</taxon>
        <taxon>Magnoliidae</taxon>
        <taxon>Laurales</taxon>
        <taxon>Calycanthaceae</taxon>
        <taxon>Calycanthus</taxon>
    </lineage>
</organism>
<dbReference type="EMBL" id="AJ428413">
    <property type="protein sequence ID" value="CAD28748.1"/>
    <property type="molecule type" value="Genomic_DNA"/>
</dbReference>
<dbReference type="RefSeq" id="NP_862781.1">
    <property type="nucleotide sequence ID" value="NC_004993.1"/>
</dbReference>
<dbReference type="SMR" id="Q7HKX5"/>
<dbReference type="GeneID" id="2598018"/>
<dbReference type="GO" id="GO:0009535">
    <property type="term" value="C:chloroplast thylakoid membrane"/>
    <property type="evidence" value="ECO:0007669"/>
    <property type="project" value="UniProtKB-SubCell"/>
</dbReference>
<dbReference type="GO" id="GO:0015979">
    <property type="term" value="P:photosynthesis"/>
    <property type="evidence" value="ECO:0007669"/>
    <property type="project" value="InterPro"/>
</dbReference>
<dbReference type="HAMAP" id="MF_00293">
    <property type="entry name" value="PSII_PsbN"/>
    <property type="match status" value="1"/>
</dbReference>
<dbReference type="InterPro" id="IPR003398">
    <property type="entry name" value="PSII_PsbN"/>
</dbReference>
<dbReference type="PANTHER" id="PTHR35326">
    <property type="entry name" value="PROTEIN PSBN"/>
    <property type="match status" value="1"/>
</dbReference>
<dbReference type="PANTHER" id="PTHR35326:SF3">
    <property type="entry name" value="PROTEIN PSBN"/>
    <property type="match status" value="1"/>
</dbReference>
<dbReference type="Pfam" id="PF02468">
    <property type="entry name" value="PsbN"/>
    <property type="match status" value="1"/>
</dbReference>
<feature type="chain" id="PRO_0000207877" description="Protein PsbN">
    <location>
        <begin position="1"/>
        <end position="43"/>
    </location>
</feature>
<feature type="transmembrane region" description="Helical" evidence="1">
    <location>
        <begin position="5"/>
        <end position="27"/>
    </location>
</feature>
<keyword id="KW-0150">Chloroplast</keyword>
<keyword id="KW-0472">Membrane</keyword>
<keyword id="KW-0934">Plastid</keyword>
<keyword id="KW-0793">Thylakoid</keyword>
<keyword id="KW-0812">Transmembrane</keyword>
<keyword id="KW-1133">Transmembrane helix</keyword>
<evidence type="ECO:0000255" key="1">
    <source>
        <dbReference type="HAMAP-Rule" id="MF_00293"/>
    </source>
</evidence>
<geneLocation type="chloroplast"/>
<gene>
    <name evidence="1" type="primary">psbN</name>
</gene>